<reference key="1">
    <citation type="journal article" date="2007" name="J. Bacteriol.">
        <title>The genome sequence of avian pathogenic Escherichia coli strain O1:K1:H7 shares strong similarities with human extraintestinal pathogenic E. coli genomes.</title>
        <authorList>
            <person name="Johnson T.J."/>
            <person name="Kariyawasam S."/>
            <person name="Wannemuehler Y."/>
            <person name="Mangiamele P."/>
            <person name="Johnson S.J."/>
            <person name="Doetkott C."/>
            <person name="Skyberg J.A."/>
            <person name="Lynne A.M."/>
            <person name="Johnson J.R."/>
            <person name="Nolan L.K."/>
        </authorList>
    </citation>
    <scope>NUCLEOTIDE SEQUENCE [LARGE SCALE GENOMIC DNA]</scope>
</reference>
<sequence length="217" mass="23339">MNQTLLSSFGTPFERVENALAALREGRGVMVLDDEDRENEGDMIFPAETMTVEQMALTIRHGSGIVCLCITDDRRKQLDLPMMVENNTSAYGTGFTVTIEAAEGVTTGVSAADRITTVRAAIADGAKPSDLNRPGHVFPLRAQAGGVLTRGGHTEATIDLMTLAGFKPAGVLCELTNDDGTMARAPECIEFANKHNMALVTIEDLVAYRQAHERKAS</sequence>
<accession>A1AFX0</accession>
<comment type="function">
    <text evidence="1">Catalyzes the conversion of D-ribulose 5-phosphate to formate and 3,4-dihydroxy-2-butanone 4-phosphate.</text>
</comment>
<comment type="catalytic activity">
    <reaction evidence="1">
        <text>D-ribulose 5-phosphate = (2S)-2-hydroxy-3-oxobutyl phosphate + formate + H(+)</text>
        <dbReference type="Rhea" id="RHEA:18457"/>
        <dbReference type="ChEBI" id="CHEBI:15378"/>
        <dbReference type="ChEBI" id="CHEBI:15740"/>
        <dbReference type="ChEBI" id="CHEBI:58121"/>
        <dbReference type="ChEBI" id="CHEBI:58830"/>
        <dbReference type="EC" id="4.1.99.12"/>
    </reaction>
</comment>
<comment type="cofactor">
    <cofactor evidence="1">
        <name>Mg(2+)</name>
        <dbReference type="ChEBI" id="CHEBI:18420"/>
    </cofactor>
    <cofactor evidence="1">
        <name>Mn(2+)</name>
        <dbReference type="ChEBI" id="CHEBI:29035"/>
    </cofactor>
    <text evidence="1">Binds 2 divalent metal cations per subunit. Magnesium or manganese.</text>
</comment>
<comment type="pathway">
    <text evidence="1">Cofactor biosynthesis; riboflavin biosynthesis; 2-hydroxy-3-oxobutyl phosphate from D-ribulose 5-phosphate: step 1/1.</text>
</comment>
<comment type="subunit">
    <text evidence="1">Homodimer.</text>
</comment>
<comment type="similarity">
    <text evidence="1">Belongs to the DHBP synthase family.</text>
</comment>
<evidence type="ECO:0000255" key="1">
    <source>
        <dbReference type="HAMAP-Rule" id="MF_00180"/>
    </source>
</evidence>
<protein>
    <recommendedName>
        <fullName evidence="1">3,4-dihydroxy-2-butanone 4-phosphate synthase</fullName>
        <shortName evidence="1">DHBP synthase</shortName>
        <ecNumber evidence="1">4.1.99.12</ecNumber>
    </recommendedName>
</protein>
<keyword id="KW-0456">Lyase</keyword>
<keyword id="KW-0460">Magnesium</keyword>
<keyword id="KW-0464">Manganese</keyword>
<keyword id="KW-0479">Metal-binding</keyword>
<keyword id="KW-1185">Reference proteome</keyword>
<keyword id="KW-0686">Riboflavin biosynthesis</keyword>
<gene>
    <name evidence="1" type="primary">ribB</name>
    <name type="ordered locus">Ecok1_30660</name>
    <name type="ORF">APECO1_3366</name>
</gene>
<dbReference type="EC" id="4.1.99.12" evidence="1"/>
<dbReference type="EMBL" id="CP000468">
    <property type="protein sequence ID" value="ABJ02560.1"/>
    <property type="molecule type" value="Genomic_DNA"/>
</dbReference>
<dbReference type="RefSeq" id="WP_001076989.1">
    <property type="nucleotide sequence ID" value="NZ_CADILS010000003.1"/>
</dbReference>
<dbReference type="SMR" id="A1AFX0"/>
<dbReference type="KEGG" id="ecv:APECO1_3366"/>
<dbReference type="HOGENOM" id="CLU_020273_3_0_6"/>
<dbReference type="UniPathway" id="UPA00275">
    <property type="reaction ID" value="UER00399"/>
</dbReference>
<dbReference type="Proteomes" id="UP000008216">
    <property type="component" value="Chromosome"/>
</dbReference>
<dbReference type="GO" id="GO:0005829">
    <property type="term" value="C:cytosol"/>
    <property type="evidence" value="ECO:0007669"/>
    <property type="project" value="TreeGrafter"/>
</dbReference>
<dbReference type="GO" id="GO:0008686">
    <property type="term" value="F:3,4-dihydroxy-2-butanone-4-phosphate synthase activity"/>
    <property type="evidence" value="ECO:0007669"/>
    <property type="project" value="UniProtKB-UniRule"/>
</dbReference>
<dbReference type="GO" id="GO:0000287">
    <property type="term" value="F:magnesium ion binding"/>
    <property type="evidence" value="ECO:0007669"/>
    <property type="project" value="UniProtKB-UniRule"/>
</dbReference>
<dbReference type="GO" id="GO:0030145">
    <property type="term" value="F:manganese ion binding"/>
    <property type="evidence" value="ECO:0007669"/>
    <property type="project" value="UniProtKB-UniRule"/>
</dbReference>
<dbReference type="GO" id="GO:0009231">
    <property type="term" value="P:riboflavin biosynthetic process"/>
    <property type="evidence" value="ECO:0007669"/>
    <property type="project" value="UniProtKB-UniRule"/>
</dbReference>
<dbReference type="FunFam" id="3.90.870.10:FF:000002">
    <property type="entry name" value="3,4-dihydroxy-2-butanone 4-phosphate synthase"/>
    <property type="match status" value="1"/>
</dbReference>
<dbReference type="Gene3D" id="3.90.870.10">
    <property type="entry name" value="DHBP synthase"/>
    <property type="match status" value="1"/>
</dbReference>
<dbReference type="HAMAP" id="MF_00180">
    <property type="entry name" value="RibB"/>
    <property type="match status" value="1"/>
</dbReference>
<dbReference type="InterPro" id="IPR017945">
    <property type="entry name" value="DHBP_synth_RibB-like_a/b_dom"/>
</dbReference>
<dbReference type="InterPro" id="IPR000422">
    <property type="entry name" value="DHBP_synthase_RibB"/>
</dbReference>
<dbReference type="NCBIfam" id="TIGR00506">
    <property type="entry name" value="ribB"/>
    <property type="match status" value="1"/>
</dbReference>
<dbReference type="PANTHER" id="PTHR21327:SF38">
    <property type="entry name" value="3,4-DIHYDROXY-2-BUTANONE 4-PHOSPHATE SYNTHASE"/>
    <property type="match status" value="1"/>
</dbReference>
<dbReference type="PANTHER" id="PTHR21327">
    <property type="entry name" value="GTP CYCLOHYDROLASE II-RELATED"/>
    <property type="match status" value="1"/>
</dbReference>
<dbReference type="Pfam" id="PF00926">
    <property type="entry name" value="DHBP_synthase"/>
    <property type="match status" value="1"/>
</dbReference>
<dbReference type="SUPFAM" id="SSF55821">
    <property type="entry name" value="YrdC/RibB"/>
    <property type="match status" value="1"/>
</dbReference>
<proteinExistence type="inferred from homology"/>
<feature type="chain" id="PRO_1000040605" description="3,4-dihydroxy-2-butanone 4-phosphate synthase">
    <location>
        <begin position="1"/>
        <end position="217"/>
    </location>
</feature>
<feature type="binding site" evidence="1">
    <location>
        <begin position="37"/>
        <end position="38"/>
    </location>
    <ligand>
        <name>D-ribulose 5-phosphate</name>
        <dbReference type="ChEBI" id="CHEBI:58121"/>
    </ligand>
</feature>
<feature type="binding site" evidence="1">
    <location>
        <position position="38"/>
    </location>
    <ligand>
        <name>Mg(2+)</name>
        <dbReference type="ChEBI" id="CHEBI:18420"/>
        <label>1</label>
    </ligand>
</feature>
<feature type="binding site" evidence="1">
    <location>
        <position position="38"/>
    </location>
    <ligand>
        <name>Mg(2+)</name>
        <dbReference type="ChEBI" id="CHEBI:18420"/>
        <label>2</label>
    </ligand>
</feature>
<feature type="binding site" evidence="1">
    <location>
        <position position="42"/>
    </location>
    <ligand>
        <name>D-ribulose 5-phosphate</name>
        <dbReference type="ChEBI" id="CHEBI:58121"/>
    </ligand>
</feature>
<feature type="binding site" evidence="1">
    <location>
        <begin position="150"/>
        <end position="154"/>
    </location>
    <ligand>
        <name>D-ribulose 5-phosphate</name>
        <dbReference type="ChEBI" id="CHEBI:58121"/>
    </ligand>
</feature>
<feature type="binding site" evidence="1">
    <location>
        <position position="153"/>
    </location>
    <ligand>
        <name>Mg(2+)</name>
        <dbReference type="ChEBI" id="CHEBI:18420"/>
        <label>2</label>
    </ligand>
</feature>
<feature type="binding site" evidence="1">
    <location>
        <position position="174"/>
    </location>
    <ligand>
        <name>D-ribulose 5-phosphate</name>
        <dbReference type="ChEBI" id="CHEBI:58121"/>
    </ligand>
</feature>
<feature type="site" description="Essential for catalytic activity" evidence="1">
    <location>
        <position position="136"/>
    </location>
</feature>
<feature type="site" description="Essential for catalytic activity" evidence="1">
    <location>
        <position position="174"/>
    </location>
</feature>
<name>RIBB_ECOK1</name>
<organism>
    <name type="scientific">Escherichia coli O1:K1 / APEC</name>
    <dbReference type="NCBI Taxonomy" id="405955"/>
    <lineage>
        <taxon>Bacteria</taxon>
        <taxon>Pseudomonadati</taxon>
        <taxon>Pseudomonadota</taxon>
        <taxon>Gammaproteobacteria</taxon>
        <taxon>Enterobacterales</taxon>
        <taxon>Enterobacteriaceae</taxon>
        <taxon>Escherichia</taxon>
    </lineage>
</organism>